<reference key="1">
    <citation type="submission" date="2008-06" db="EMBL/GenBank/DDBJ databases">
        <title>Genome and proteome analysis of A. pleuropneumoniae serotype 7.</title>
        <authorList>
            <person name="Linke B."/>
            <person name="Buettner F."/>
            <person name="Martinez-Arias R."/>
            <person name="Goesmann A."/>
            <person name="Baltes N."/>
            <person name="Tegetmeyer H."/>
            <person name="Singh M."/>
            <person name="Gerlach G.F."/>
        </authorList>
    </citation>
    <scope>NUCLEOTIDE SEQUENCE [LARGE SCALE GENOMIC DNA]</scope>
    <source>
        <strain>AP76</strain>
    </source>
</reference>
<gene>
    <name evidence="1" type="primary">queA</name>
    <name type="ordered locus">APP7_0826</name>
</gene>
<dbReference type="EC" id="2.4.99.17" evidence="1"/>
<dbReference type="EMBL" id="CP001091">
    <property type="protein sequence ID" value="ACE61478.1"/>
    <property type="molecule type" value="Genomic_DNA"/>
</dbReference>
<dbReference type="RefSeq" id="WP_005612037.1">
    <property type="nucleotide sequence ID" value="NC_010939.1"/>
</dbReference>
<dbReference type="SMR" id="B3GXL9"/>
<dbReference type="KEGG" id="apa:APP7_0826"/>
<dbReference type="HOGENOM" id="CLU_039110_1_0_6"/>
<dbReference type="UniPathway" id="UPA00392"/>
<dbReference type="Proteomes" id="UP000001226">
    <property type="component" value="Chromosome"/>
</dbReference>
<dbReference type="GO" id="GO:0005737">
    <property type="term" value="C:cytoplasm"/>
    <property type="evidence" value="ECO:0007669"/>
    <property type="project" value="UniProtKB-SubCell"/>
</dbReference>
<dbReference type="GO" id="GO:0051075">
    <property type="term" value="F:S-adenosylmethionine:tRNA ribosyltransferase-isomerase activity"/>
    <property type="evidence" value="ECO:0007669"/>
    <property type="project" value="UniProtKB-EC"/>
</dbReference>
<dbReference type="GO" id="GO:0008616">
    <property type="term" value="P:queuosine biosynthetic process"/>
    <property type="evidence" value="ECO:0007669"/>
    <property type="project" value="UniProtKB-UniRule"/>
</dbReference>
<dbReference type="GO" id="GO:0002099">
    <property type="term" value="P:tRNA wobble guanine modification"/>
    <property type="evidence" value="ECO:0007669"/>
    <property type="project" value="TreeGrafter"/>
</dbReference>
<dbReference type="FunFam" id="2.40.10.240:FF:000001">
    <property type="entry name" value="S-adenosylmethionine:tRNA ribosyltransferase-isomerase"/>
    <property type="match status" value="1"/>
</dbReference>
<dbReference type="FunFam" id="3.40.1780.10:FF:000001">
    <property type="entry name" value="S-adenosylmethionine:tRNA ribosyltransferase-isomerase"/>
    <property type="match status" value="1"/>
</dbReference>
<dbReference type="Gene3D" id="2.40.10.240">
    <property type="entry name" value="QueA-like"/>
    <property type="match status" value="1"/>
</dbReference>
<dbReference type="Gene3D" id="3.40.1780.10">
    <property type="entry name" value="QueA-like"/>
    <property type="match status" value="1"/>
</dbReference>
<dbReference type="HAMAP" id="MF_00113">
    <property type="entry name" value="QueA"/>
    <property type="match status" value="1"/>
</dbReference>
<dbReference type="InterPro" id="IPR003699">
    <property type="entry name" value="QueA"/>
</dbReference>
<dbReference type="InterPro" id="IPR042118">
    <property type="entry name" value="QueA_dom1"/>
</dbReference>
<dbReference type="InterPro" id="IPR042119">
    <property type="entry name" value="QueA_dom2"/>
</dbReference>
<dbReference type="InterPro" id="IPR036100">
    <property type="entry name" value="QueA_sf"/>
</dbReference>
<dbReference type="NCBIfam" id="NF001140">
    <property type="entry name" value="PRK00147.1"/>
    <property type="match status" value="1"/>
</dbReference>
<dbReference type="NCBIfam" id="TIGR00113">
    <property type="entry name" value="queA"/>
    <property type="match status" value="1"/>
</dbReference>
<dbReference type="PANTHER" id="PTHR30307">
    <property type="entry name" value="S-ADENOSYLMETHIONINE:TRNA RIBOSYLTRANSFERASE-ISOMERASE"/>
    <property type="match status" value="1"/>
</dbReference>
<dbReference type="PANTHER" id="PTHR30307:SF0">
    <property type="entry name" value="S-ADENOSYLMETHIONINE:TRNA RIBOSYLTRANSFERASE-ISOMERASE"/>
    <property type="match status" value="1"/>
</dbReference>
<dbReference type="Pfam" id="PF02547">
    <property type="entry name" value="Queuosine_synth"/>
    <property type="match status" value="1"/>
</dbReference>
<dbReference type="SUPFAM" id="SSF111337">
    <property type="entry name" value="QueA-like"/>
    <property type="match status" value="1"/>
</dbReference>
<proteinExistence type="inferred from homology"/>
<feature type="chain" id="PRO_1000094746" description="S-adenosylmethionine:tRNA ribosyltransferase-isomerase">
    <location>
        <begin position="1"/>
        <end position="361"/>
    </location>
</feature>
<accession>B3GXL9</accession>
<keyword id="KW-0963">Cytoplasm</keyword>
<keyword id="KW-0671">Queuosine biosynthesis</keyword>
<keyword id="KW-0949">S-adenosyl-L-methionine</keyword>
<keyword id="KW-0808">Transferase</keyword>
<sequence length="361" mass="40184">MLVSDFHFDLPDELIARYPTEERTASRLLHLNGETGHFEDKQFFDLLDQINEGDLLIFNNTRVIPARLYGRKASGGKLEVLVERVLDEHRCLAHVRASKAPKEGAELVLGEDKLGEGNGFKAIMTARHDALFELHFNEEQPVFDLLQQAGHMPLPPYIDRPDEDADQERYQTVYSKVLGAVAAPTAGLHFDNPTLEKLKAKGVNIAFVTLHVGAGTFQPVRVDNILDHKMHAEYAEVSQAVVDQILATKATGKRVIAVGTTSVRSIESAAQAAEKEGKLIAPFFSDTSIFLYPGKTFRIVDALVTNFHLPESTLIMLVSAFAGYRNTMKAYQHAVEAKYRFFSYGDAMFINKNPNALNDLP</sequence>
<comment type="function">
    <text evidence="1">Transfers and isomerizes the ribose moiety from AdoMet to the 7-aminomethyl group of 7-deazaguanine (preQ1-tRNA) to give epoxyqueuosine (oQ-tRNA).</text>
</comment>
<comment type="catalytic activity">
    <reaction evidence="1">
        <text>7-aminomethyl-7-carbaguanosine(34) in tRNA + S-adenosyl-L-methionine = epoxyqueuosine(34) in tRNA + adenine + L-methionine + 2 H(+)</text>
        <dbReference type="Rhea" id="RHEA:32155"/>
        <dbReference type="Rhea" id="RHEA-COMP:10342"/>
        <dbReference type="Rhea" id="RHEA-COMP:18582"/>
        <dbReference type="ChEBI" id="CHEBI:15378"/>
        <dbReference type="ChEBI" id="CHEBI:16708"/>
        <dbReference type="ChEBI" id="CHEBI:57844"/>
        <dbReference type="ChEBI" id="CHEBI:59789"/>
        <dbReference type="ChEBI" id="CHEBI:82833"/>
        <dbReference type="ChEBI" id="CHEBI:194443"/>
        <dbReference type="EC" id="2.4.99.17"/>
    </reaction>
</comment>
<comment type="pathway">
    <text evidence="1">tRNA modification; tRNA-queuosine biosynthesis.</text>
</comment>
<comment type="subunit">
    <text evidence="1">Monomer.</text>
</comment>
<comment type="subcellular location">
    <subcellularLocation>
        <location evidence="1">Cytoplasm</location>
    </subcellularLocation>
</comment>
<comment type="similarity">
    <text evidence="1">Belongs to the QueA family.</text>
</comment>
<evidence type="ECO:0000255" key="1">
    <source>
        <dbReference type="HAMAP-Rule" id="MF_00113"/>
    </source>
</evidence>
<organism>
    <name type="scientific">Actinobacillus pleuropneumoniae serotype 7 (strain AP76)</name>
    <dbReference type="NCBI Taxonomy" id="537457"/>
    <lineage>
        <taxon>Bacteria</taxon>
        <taxon>Pseudomonadati</taxon>
        <taxon>Pseudomonadota</taxon>
        <taxon>Gammaproteobacteria</taxon>
        <taxon>Pasteurellales</taxon>
        <taxon>Pasteurellaceae</taxon>
        <taxon>Actinobacillus</taxon>
    </lineage>
</organism>
<name>QUEA_ACTP7</name>
<protein>
    <recommendedName>
        <fullName evidence="1">S-adenosylmethionine:tRNA ribosyltransferase-isomerase</fullName>
        <ecNumber evidence="1">2.4.99.17</ecNumber>
    </recommendedName>
    <alternativeName>
        <fullName evidence="1">Queuosine biosynthesis protein QueA</fullName>
    </alternativeName>
</protein>